<dbReference type="EC" id="6.3.4.6"/>
<dbReference type="EC" id="3.5.1.54"/>
<dbReference type="EMBL" id="DQ512718">
    <property type="protein sequence ID" value="ABF58890.1"/>
    <property type="molecule type" value="Genomic_DNA"/>
</dbReference>
<dbReference type="SMR" id="A5H0J2"/>
<dbReference type="UniPathway" id="UPA00258">
    <property type="reaction ID" value="UER00371"/>
</dbReference>
<dbReference type="UniPathway" id="UPA00258">
    <property type="reaction ID" value="UER00372"/>
</dbReference>
<dbReference type="GO" id="GO:0004039">
    <property type="term" value="F:allophanate hydrolase activity"/>
    <property type="evidence" value="ECO:0007669"/>
    <property type="project" value="UniProtKB-EC"/>
</dbReference>
<dbReference type="GO" id="GO:0005524">
    <property type="term" value="F:ATP binding"/>
    <property type="evidence" value="ECO:0007669"/>
    <property type="project" value="UniProtKB-KW"/>
</dbReference>
<dbReference type="GO" id="GO:0046872">
    <property type="term" value="F:metal ion binding"/>
    <property type="evidence" value="ECO:0007669"/>
    <property type="project" value="InterPro"/>
</dbReference>
<dbReference type="GO" id="GO:0004847">
    <property type="term" value="F:urea carboxylase activity"/>
    <property type="evidence" value="ECO:0007669"/>
    <property type="project" value="UniProtKB-EC"/>
</dbReference>
<dbReference type="GO" id="GO:0043419">
    <property type="term" value="P:urea catabolic process"/>
    <property type="evidence" value="ECO:0007669"/>
    <property type="project" value="UniProtKB-UniPathway"/>
</dbReference>
<dbReference type="CDD" id="cd06850">
    <property type="entry name" value="biotinyl_domain"/>
    <property type="match status" value="1"/>
</dbReference>
<dbReference type="FunFam" id="2.40.50.100:FF:000003">
    <property type="entry name" value="Acetyl-CoA carboxylase biotin carboxyl carrier protein"/>
    <property type="match status" value="1"/>
</dbReference>
<dbReference type="FunFam" id="3.40.50.20:FF:000010">
    <property type="entry name" value="Propionyl-CoA carboxylase subunit alpha"/>
    <property type="match status" value="1"/>
</dbReference>
<dbReference type="FunFam" id="3.10.490.10:FF:000010">
    <property type="entry name" value="Urea amidolyase"/>
    <property type="match status" value="1"/>
</dbReference>
<dbReference type="Gene3D" id="1.20.58.1700">
    <property type="match status" value="1"/>
</dbReference>
<dbReference type="Gene3D" id="2.40.50.100">
    <property type="match status" value="1"/>
</dbReference>
<dbReference type="Gene3D" id="3.30.1360.40">
    <property type="match status" value="1"/>
</dbReference>
<dbReference type="Gene3D" id="3.90.1300.10">
    <property type="entry name" value="Amidase signature (AS) domain"/>
    <property type="match status" value="1"/>
</dbReference>
<dbReference type="Gene3D" id="3.30.470.20">
    <property type="entry name" value="ATP-grasp fold, B domain"/>
    <property type="match status" value="1"/>
</dbReference>
<dbReference type="Gene3D" id="2.40.100.10">
    <property type="entry name" value="Cyclophilin-like"/>
    <property type="match status" value="2"/>
</dbReference>
<dbReference type="Gene3D" id="3.10.490.10">
    <property type="entry name" value="Gamma-glutamyl cyclotransferase-like"/>
    <property type="match status" value="1"/>
</dbReference>
<dbReference type="InterPro" id="IPR053844">
    <property type="entry name" value="AH_C"/>
</dbReference>
<dbReference type="InterPro" id="IPR014085">
    <property type="entry name" value="Allophanate_hydrolase"/>
</dbReference>
<dbReference type="InterPro" id="IPR023631">
    <property type="entry name" value="Amidase_dom"/>
</dbReference>
<dbReference type="InterPro" id="IPR036928">
    <property type="entry name" value="AS_sf"/>
</dbReference>
<dbReference type="InterPro" id="IPR011761">
    <property type="entry name" value="ATP-grasp"/>
</dbReference>
<dbReference type="InterPro" id="IPR005481">
    <property type="entry name" value="BC-like_N"/>
</dbReference>
<dbReference type="InterPro" id="IPR001882">
    <property type="entry name" value="Biotin_BS"/>
</dbReference>
<dbReference type="InterPro" id="IPR050856">
    <property type="entry name" value="Biotin_carboxylase_complex"/>
</dbReference>
<dbReference type="InterPro" id="IPR011764">
    <property type="entry name" value="Biotin_carboxylation_dom"/>
</dbReference>
<dbReference type="InterPro" id="IPR005482">
    <property type="entry name" value="Biotin_COase_C"/>
</dbReference>
<dbReference type="InterPro" id="IPR000089">
    <property type="entry name" value="Biotin_lipoyl"/>
</dbReference>
<dbReference type="InterPro" id="IPR005479">
    <property type="entry name" value="CbamoylP_synth_lsu-like_ATP-bd"/>
</dbReference>
<dbReference type="InterPro" id="IPR003778">
    <property type="entry name" value="CT_A_B"/>
</dbReference>
<dbReference type="InterPro" id="IPR003833">
    <property type="entry name" value="CT_C_D"/>
</dbReference>
<dbReference type="InterPro" id="IPR029000">
    <property type="entry name" value="Cyclophilin-like_dom_sf"/>
</dbReference>
<dbReference type="InterPro" id="IPR016185">
    <property type="entry name" value="PreATP-grasp_dom_sf"/>
</dbReference>
<dbReference type="InterPro" id="IPR011054">
    <property type="entry name" value="Rudment_hybrid_motif"/>
</dbReference>
<dbReference type="InterPro" id="IPR011053">
    <property type="entry name" value="Single_hybrid_motif"/>
</dbReference>
<dbReference type="InterPro" id="IPR014084">
    <property type="entry name" value="Urea_COase"/>
</dbReference>
<dbReference type="NCBIfam" id="TIGR02713">
    <property type="entry name" value="allophanate_hyd"/>
    <property type="match status" value="1"/>
</dbReference>
<dbReference type="NCBIfam" id="NF006043">
    <property type="entry name" value="PRK08186.1"/>
    <property type="match status" value="1"/>
</dbReference>
<dbReference type="NCBIfam" id="TIGR00724">
    <property type="entry name" value="urea_amlyse_rel"/>
    <property type="match status" value="1"/>
</dbReference>
<dbReference type="NCBIfam" id="TIGR02712">
    <property type="entry name" value="urea_carbox"/>
    <property type="match status" value="1"/>
</dbReference>
<dbReference type="PANTHER" id="PTHR18866">
    <property type="entry name" value="CARBOXYLASE:PYRUVATE/ACETYL-COA/PROPIONYL-COA CARBOXYLASE"/>
    <property type="match status" value="1"/>
</dbReference>
<dbReference type="PANTHER" id="PTHR18866:SF128">
    <property type="entry name" value="UREA AMIDOLYASE"/>
    <property type="match status" value="1"/>
</dbReference>
<dbReference type="Pfam" id="PF21986">
    <property type="entry name" value="AH_C"/>
    <property type="match status" value="1"/>
</dbReference>
<dbReference type="Pfam" id="PF01425">
    <property type="entry name" value="Amidase"/>
    <property type="match status" value="1"/>
</dbReference>
<dbReference type="Pfam" id="PF02785">
    <property type="entry name" value="Biotin_carb_C"/>
    <property type="match status" value="1"/>
</dbReference>
<dbReference type="Pfam" id="PF00289">
    <property type="entry name" value="Biotin_carb_N"/>
    <property type="match status" value="1"/>
</dbReference>
<dbReference type="Pfam" id="PF00364">
    <property type="entry name" value="Biotin_lipoyl"/>
    <property type="match status" value="1"/>
</dbReference>
<dbReference type="Pfam" id="PF02786">
    <property type="entry name" value="CPSase_L_D2"/>
    <property type="match status" value="1"/>
</dbReference>
<dbReference type="Pfam" id="PF02626">
    <property type="entry name" value="CT_A_B"/>
    <property type="match status" value="1"/>
</dbReference>
<dbReference type="Pfam" id="PF02682">
    <property type="entry name" value="CT_C_D"/>
    <property type="match status" value="1"/>
</dbReference>
<dbReference type="SMART" id="SM00796">
    <property type="entry name" value="AHS1"/>
    <property type="match status" value="1"/>
</dbReference>
<dbReference type="SMART" id="SM00797">
    <property type="entry name" value="AHS2"/>
    <property type="match status" value="1"/>
</dbReference>
<dbReference type="SMART" id="SM00878">
    <property type="entry name" value="Biotin_carb_C"/>
    <property type="match status" value="1"/>
</dbReference>
<dbReference type="SUPFAM" id="SSF75304">
    <property type="entry name" value="Amidase signature (AS) enzymes"/>
    <property type="match status" value="1"/>
</dbReference>
<dbReference type="SUPFAM" id="SSF50891">
    <property type="entry name" value="Cyclophilin-like"/>
    <property type="match status" value="2"/>
</dbReference>
<dbReference type="SUPFAM" id="SSF56059">
    <property type="entry name" value="Glutathione synthetase ATP-binding domain-like"/>
    <property type="match status" value="1"/>
</dbReference>
<dbReference type="SUPFAM" id="SSF160467">
    <property type="entry name" value="PH0987 N-terminal domain-like"/>
    <property type="match status" value="1"/>
</dbReference>
<dbReference type="SUPFAM" id="SSF52440">
    <property type="entry name" value="PreATP-grasp domain"/>
    <property type="match status" value="1"/>
</dbReference>
<dbReference type="SUPFAM" id="SSF51246">
    <property type="entry name" value="Rudiment single hybrid motif"/>
    <property type="match status" value="1"/>
</dbReference>
<dbReference type="SUPFAM" id="SSF51230">
    <property type="entry name" value="Single hybrid motif"/>
    <property type="match status" value="1"/>
</dbReference>
<dbReference type="PROSITE" id="PS50975">
    <property type="entry name" value="ATP_GRASP"/>
    <property type="match status" value="1"/>
</dbReference>
<dbReference type="PROSITE" id="PS50979">
    <property type="entry name" value="BC"/>
    <property type="match status" value="1"/>
</dbReference>
<dbReference type="PROSITE" id="PS00188">
    <property type="entry name" value="BIOTIN"/>
    <property type="match status" value="1"/>
</dbReference>
<dbReference type="PROSITE" id="PS50968">
    <property type="entry name" value="BIOTINYL_LIPOYL"/>
    <property type="match status" value="1"/>
</dbReference>
<dbReference type="PROSITE" id="PS00866">
    <property type="entry name" value="CPSASE_1"/>
    <property type="match status" value="1"/>
</dbReference>
<dbReference type="PROSITE" id="PS00867">
    <property type="entry name" value="CPSASE_2"/>
    <property type="match status" value="1"/>
</dbReference>
<organism>
    <name type="scientific">Lachancea kluyveri</name>
    <name type="common">Yeast</name>
    <name type="synonym">Saccharomyces kluyveri</name>
    <dbReference type="NCBI Taxonomy" id="4934"/>
    <lineage>
        <taxon>Eukaryota</taxon>
        <taxon>Fungi</taxon>
        <taxon>Dikarya</taxon>
        <taxon>Ascomycota</taxon>
        <taxon>Saccharomycotina</taxon>
        <taxon>Saccharomycetes</taxon>
        <taxon>Saccharomycetales</taxon>
        <taxon>Saccharomycetaceae</taxon>
        <taxon>Lachancea</taxon>
    </lineage>
</organism>
<comment type="function">
    <text evidence="4">Involved in uracil catabolism. Hydrolysis of urea to ammonia and CO(2).</text>
</comment>
<comment type="catalytic activity">
    <reaction>
        <text>urea + hydrogencarbonate + ATP = urea-1-carboxylate + ADP + phosphate + H(+)</text>
        <dbReference type="Rhea" id="RHEA:20896"/>
        <dbReference type="ChEBI" id="CHEBI:15378"/>
        <dbReference type="ChEBI" id="CHEBI:15832"/>
        <dbReference type="ChEBI" id="CHEBI:16199"/>
        <dbReference type="ChEBI" id="CHEBI:17544"/>
        <dbReference type="ChEBI" id="CHEBI:30616"/>
        <dbReference type="ChEBI" id="CHEBI:43474"/>
        <dbReference type="ChEBI" id="CHEBI:456216"/>
        <dbReference type="EC" id="6.3.4.6"/>
    </reaction>
</comment>
<comment type="catalytic activity">
    <reaction>
        <text>urea-1-carboxylate + H2O + 3 H(+) = 2 NH4(+) + 2 CO2</text>
        <dbReference type="Rhea" id="RHEA:19029"/>
        <dbReference type="ChEBI" id="CHEBI:15377"/>
        <dbReference type="ChEBI" id="CHEBI:15378"/>
        <dbReference type="ChEBI" id="CHEBI:15832"/>
        <dbReference type="ChEBI" id="CHEBI:16526"/>
        <dbReference type="ChEBI" id="CHEBI:28938"/>
        <dbReference type="EC" id="3.5.1.54"/>
    </reaction>
</comment>
<comment type="cofactor">
    <cofactor evidence="1">
        <name>biotin</name>
        <dbReference type="ChEBI" id="CHEBI:57586"/>
    </cofactor>
</comment>
<comment type="pathway">
    <text>Nitrogen metabolism; urea degradation; CO(2) and NH(3) from urea (allophanate route): step 1/2.</text>
</comment>
<comment type="pathway">
    <text>Nitrogen metabolism; urea degradation; CO(2) and NH(3) from urea (allophanate route): step 2/2.</text>
</comment>
<comment type="subunit">
    <text evidence="1">Monomer.</text>
</comment>
<comment type="similarity">
    <text evidence="5">Belongs to the DUR1,2 family.</text>
</comment>
<keyword id="KW-0067">ATP-binding</keyword>
<keyword id="KW-0092">Biotin</keyword>
<keyword id="KW-0378">Hydrolase</keyword>
<keyword id="KW-0436">Ligase</keyword>
<keyword id="KW-0511">Multifunctional enzyme</keyword>
<keyword id="KW-0547">Nucleotide-binding</keyword>
<reference key="1">
    <citation type="journal article" date="2008" name="J. Mol. Biol.">
        <title>A second pathway to degrade pyrimidine nucleic acid precursors in eukaryotes.</title>
        <authorList>
            <person name="Andersen G."/>
            <person name="Bjoernberg O."/>
            <person name="Polakova S."/>
            <person name="Pynyaha Y."/>
            <person name="Rasmussen A."/>
            <person name="Moeller K."/>
            <person name="Hofer A."/>
            <person name="Moritz T."/>
            <person name="Sandrini M.P."/>
            <person name="Merico A.M."/>
            <person name="Compagno C."/>
            <person name="Aekerlund H.E."/>
            <person name="Gojkovic Z."/>
            <person name="Piskur J."/>
        </authorList>
    </citation>
    <scope>NUCLEOTIDE SEQUENCE [GENOMIC DNA]</scope>
    <scope>FUNCTION</scope>
</reference>
<sequence length="1830" mass="201131">MSVDTLGWSAQDWIDFHGKSTPEHSYNTLLSLLKSQKSAPEDPAWISLINEANLAHQWKVLQSKANKQQLPLYGVPIAVKDNIDSKGSPTTAACPAFEYNPSADSTVVALLKDAGAIVIGKTNLDQFATGLVGTRSPYGKTPCVFSDKHVSGGSSAGSASAVGRGIVPIALGTDTAGSGRVPAALNNLIGLKPTKGLFSCSGVVPACKSLDCVSVFAMNLSDAERCFKVMAKPDLENDEYSRPLPSNPLQKYPKNVTIAIPKEVPWYGETENPKLYAKAIENLKVAGASIVTIDFEPLLALARCLYEGAWVAERYEATKDFFATNPPESSLDPTVTSIIKTATKYDAADSFRYEYQRQGILQKVDQTLKDIDVLCVPTCPLNPTFEEVAAEPVLVNSRQGTWTNFVNLADMAALAVPAGFRPDGLPQGVTLIGKKFTDFALLELANRYFKVAFPQGSRTFGKFIDRQVTTKDDELRGPDISPEDSVKLAVVGAHLKGLPLYWQLEKVNATYLGSPKTSKNYKLYALPKTGPILKPGLRRVGEETGSQIQLEVYSVPKENFGEFISMVPEPLGIGSVELESGEWVKSFICEEFGYTQKGTVDITKYGGFKKYIDFLKQEEAKVKKPFETVLIANRGEIAVRIIKTLKKLNIRSVAVYSDPDKYSQHVIDADLGVALNGRTAAETYLDIDKIIKAAKDTNAQAIIPGYGFLSENAEFADKCVEEGIVFVGPSGEAIRKLGLKHSAREIAEKAGVPLVPGSGLVTSAKEAKEIANKLEYPVMVKSTAGGGGIGLQKVDSENEIERVFETVQHQGKAYFGDSGVFLERFVENARHVEIQMMGDGYGKAIAIGERDCSLQRRNQKIIEETPAPNLGETTRTKMRQAAESLGSLLKYKCAGTVEFIYDERRDEFYFLEVNARLQVEHPITEMVTGLDLVEWMLRIAADDAPDFESANIVVTGASIEARLYAENPAKDFRPSPGLLTDVHFPEWARVDTWVSKGTTVSAEYDPTLAKIIVHGKDRNDAIMKMNKALNETVVYGCITNIDYLRSIASSEMFKTAKVATKILDSYDYKPCAFEVTSPGAYTTVQDYPGRVGYWRIGVPPSGPMDAYSFRLANRIVGNHYKAPAIELTLNGPKILFHTETIIAISGGIAACSLNDKPIEQNKPIQVNRGDHLAIGKLSVGCRAYLAIRGGIDVPEYLGSRSTFALGNMGGYNGRVLKLGDVLFLNQPELASSSLPGPAYEPQAPPANLLPKISDDKEWTIGVTCGPHGSPDFFKPESVEEFFSEKWKVHYNSNRFGVRLIGPKPKWARKDGGEGGLHPSNAHDYVYSLGAINFTGDEPVIITSDGPSLGGFVCQAVVPEAELWKVGQVKPGDSIQFVPISYQVARQLKESQDAAIETLEDGKLQTLTSDLILPTYEDPVLVQLPKKSNLSPKVTYRQAGDRYILVEYGENQMDLNIAYRINQLINLVGKHKTVGIVEMSQGVRSVLIEYDGYKISQGALLDTLVAYESEIQFDKNWSIKSKIFKLPLAFEDSKTLECVTRYQETIRSKAPWLPNNVDFVAEVNDITHKDVENMLYSARFLVLGLGDVFLGAPCAVPLDPRHRFLGSKYNPSRTYTKNGVVGIGGMYMCIYAMDSPGGYQLVGRTIPIWDKLKLGSHSQEHPWLLTPFDQVEFYPVSEEELDRFTEDCENGKFPVQVEESVFDHKNYLKWINENIESITEFQKSQGGAKADEFARLIQVANQELESSTTNKSAVEEEYPEDAEMVYSEYSGRFWKPMVSAGDTVTKGDGLVIVEAMKTEMVVPAKKSGKVLKIVHKNGDMVDAGDLVAVIQ</sequence>
<feature type="chain" id="PRO_0000367271" description="Urea amidolyase">
    <location>
        <begin position="1"/>
        <end position="1830"/>
    </location>
</feature>
<feature type="domain" description="Biotin carboxylation">
    <location>
        <begin position="625"/>
        <end position="1068"/>
    </location>
</feature>
<feature type="domain" description="ATP-grasp" evidence="2">
    <location>
        <begin position="744"/>
        <end position="941"/>
    </location>
</feature>
<feature type="domain" description="Biotinyl-binding" evidence="3">
    <location>
        <begin position="1752"/>
        <end position="1830"/>
    </location>
</feature>
<feature type="binding site" evidence="2">
    <location>
        <begin position="115"/>
        <end position="122"/>
    </location>
    <ligand>
        <name>ATP</name>
        <dbReference type="ChEBI" id="CHEBI:30616"/>
    </ligand>
</feature>
<feature type="binding site" evidence="1">
    <location>
        <position position="740"/>
    </location>
    <ligand>
        <name>ATP</name>
        <dbReference type="ChEBI" id="CHEBI:30616"/>
    </ligand>
</feature>
<feature type="binding site" evidence="1">
    <location>
        <position position="823"/>
    </location>
    <ligand>
        <name>ATP</name>
        <dbReference type="ChEBI" id="CHEBI:30616"/>
    </ligand>
</feature>
<feature type="binding site" evidence="1">
    <location>
        <position position="858"/>
    </location>
    <ligand>
        <name>ATP</name>
        <dbReference type="ChEBI" id="CHEBI:30616"/>
    </ligand>
</feature>
<feature type="modified residue" description="N6-biotinyllysine" evidence="1 3">
    <location>
        <position position="1796"/>
    </location>
</feature>
<name>DUR1_LACKL</name>
<accession>A5H0J2</accession>
<evidence type="ECO:0000250" key="1"/>
<evidence type="ECO:0000255" key="2">
    <source>
        <dbReference type="PROSITE-ProRule" id="PRU00409"/>
    </source>
</evidence>
<evidence type="ECO:0000255" key="3">
    <source>
        <dbReference type="PROSITE-ProRule" id="PRU01066"/>
    </source>
</evidence>
<evidence type="ECO:0000269" key="4">
    <source>
    </source>
</evidence>
<evidence type="ECO:0000305" key="5"/>
<proteinExistence type="inferred from homology"/>
<gene>
    <name type="primary">DUR1,2</name>
    <name type="synonym">PYD13,15</name>
    <name type="synonym">URC3,5</name>
</gene>
<protein>
    <recommendedName>
        <fullName>Urea amidolyase</fullName>
    </recommendedName>
    <alternativeName>
        <fullName>Pyrimidine-degrading protein 13,15</fullName>
    </alternativeName>
    <alternativeName>
        <fullName>Uracil catabolism protein 3,5</fullName>
    </alternativeName>
    <domain>
        <recommendedName>
            <fullName>Urea carboxylase</fullName>
            <ecNumber>6.3.4.6</ecNumber>
        </recommendedName>
    </domain>
    <domain>
        <recommendedName>
            <fullName>Allophanate hydrolase</fullName>
            <ecNumber>3.5.1.54</ecNumber>
        </recommendedName>
    </domain>
</protein>